<sequence length="860" mass="71938">MAGLTAVVPQPGVLLILLLNLLHPAQPGGVPGAVPGGLPGGVPGGVYYPGAGIGGLGGGGGALGPGGKPPKPGAGLLGTFGAGPGGLGGAGPGAGLGAFPAGTFPGAGALVPGGAAGAAAAYKAAAKAGAGLGGVGGVPGGVGVGGVPGGVGVGGVPGGVGVGGVPGGVGGIGGIGGLGVSTGAVVPQVGAGIGAGGKPGKVPGVGLPGVYPGGVLPGTGARFPGVGVLPGVPTGTGVKAKAPGGGGAFAGIPGVGPFGGQQPGVPLGYPIKAPKLPGGYGLPYTNGKLPYGVAGAGGKAGYPTGTGVGSQAAAAAAKAAKYGAGGAGVLPGVGGGGIPGGAGAIPGIGGIAGAGTPAAAAAAKAAAKAAKYGAAGGLVPGGPGVRLPGAGIPGVGGIPGVGGIPGVGGPGIGGPGIVGGPGAVSPAAAAKAAAKAAKYGARGGVGIPTYGVGAGGFPGYGVGAGAGLGGASPAAAAAAAKAAKYGAGGAGALGGLVPGAVPGALPGAVPAVPGAGGVPGAGTPAAAAAAAAAKAAAKAGLGPGVGGVPGGVGVGGIPGGVGVGGVPGGVGPGGVTGIGAGPGGLGGAGSPAAAKSAAKAAAKAQYRAAAGLGAGVPGFGAGAGVPGFGAGAGVPGFGAGAGVPGFGAGAGVPGFGAGAVPGSLAASKAAKYGAAGGLGGPGGLGGPGGLGGPGGLGGAGVPGRVAGAAPPAAAAAAAKAAAKAAQYGLGGAGGLGAGGLGAGGLGAGGLGAGGLGAGGLGAGGLGAGGLGAGGGVSPAAAAKAAKYGAAGLGGVLGARPFPGGGVAARPGFGLSPIYPGGGAGGLGVGGKPPKPYGGALGALGYQGGGCFGKSCGRKRK</sequence>
<feature type="signal peptide" evidence="4">
    <location>
        <begin position="1"/>
        <end position="27"/>
    </location>
</feature>
<feature type="chain" id="PRO_0000021164" description="Elastin">
    <location>
        <begin position="28"/>
        <end position="860"/>
    </location>
</feature>
<feature type="modified residue" description="4-hydroxyproline" evidence="1">
    <location>
        <position position="35"/>
    </location>
</feature>
<feature type="modified residue" description="4-hydroxyproline" evidence="1">
    <location>
        <position position="72"/>
    </location>
</feature>
<feature type="modified residue" description="Hydroxyproline" evidence="1">
    <location>
        <position position="84"/>
    </location>
</feature>
<feature type="modified residue" description="4-hydroxyproline" evidence="1">
    <location>
        <position position="105"/>
    </location>
</feature>
<feature type="modified residue" description="Allysine" evidence="2">
    <location>
        <position position="123"/>
    </location>
</feature>
<feature type="modified residue" description="Allysine" evidence="2">
    <location>
        <position position="127"/>
    </location>
</feature>
<feature type="modified residue" description="4-hydroxyproline" evidence="1">
    <location>
        <position position="217"/>
    </location>
</feature>
<feature type="modified residue" description="4-hydroxyproline" evidence="1">
    <location>
        <position position="230"/>
    </location>
</feature>
<feature type="modified residue" description="4-hydroxyproline" evidence="1">
    <location>
        <position position="233"/>
    </location>
</feature>
<feature type="modified residue" description="4-hydroxyproline" evidence="1">
    <location>
        <position position="253"/>
    </location>
</feature>
<feature type="modified residue" description="Allysine" evidence="2">
    <location>
        <position position="299"/>
    </location>
</feature>
<feature type="modified residue" description="Allysine" evidence="2">
    <location>
        <position position="318"/>
    </location>
</feature>
<feature type="modified residue" description="Allysine" evidence="2">
    <location>
        <position position="321"/>
    </location>
</feature>
<feature type="modified residue" description="4-hydroxyproline" evidence="1">
    <location>
        <position position="346"/>
    </location>
</feature>
<feature type="modified residue" description="Allysine" evidence="2">
    <location>
        <position position="368"/>
    </location>
</feature>
<feature type="modified residue" description="Allysine" evidence="2">
    <location>
        <position position="371"/>
    </location>
</feature>
<feature type="modified residue" description="Hydroxyproline" evidence="1">
    <location>
        <position position="383"/>
    </location>
</feature>
<feature type="modified residue" description="4-hydroxyproline" evidence="1">
    <location>
        <position position="399"/>
    </location>
</feature>
<feature type="modified residue" description="4-hydroxyproline" evidence="1">
    <location>
        <position position="405"/>
    </location>
</feature>
<feature type="modified residue" description="Hydroxyproline" evidence="1">
    <location>
        <position position="410"/>
    </location>
</feature>
<feature type="modified residue" description="Hydroxyproline" evidence="1">
    <location>
        <position position="415"/>
    </location>
</feature>
<feature type="modified residue" description="Allysine" evidence="2">
    <location>
        <position position="431"/>
    </location>
</feature>
<feature type="modified residue" description="Allysine" evidence="2">
    <location>
        <position position="435"/>
    </location>
</feature>
<feature type="modified residue" description="Allysine" evidence="2">
    <location>
        <position position="438"/>
    </location>
</feature>
<feature type="modified residue" description="Allysine" evidence="2">
    <location>
        <position position="481"/>
    </location>
</feature>
<feature type="modified residue" description="Allysine" evidence="2">
    <location>
        <position position="484"/>
    </location>
</feature>
<feature type="modified residue" description="4-hydroxyproline" evidence="1">
    <location>
        <position position="498"/>
    </location>
</feature>
<feature type="modified residue" description="4-hydroxyproline" evidence="1">
    <location>
        <position position="519"/>
    </location>
</feature>
<feature type="modified residue" description="Allysine" evidence="2">
    <location>
        <position position="534"/>
    </location>
</feature>
<feature type="modified residue" description="Allysine" evidence="2">
    <location>
        <position position="595"/>
    </location>
</feature>
<feature type="modified residue" description="Allysine" evidence="2">
    <location>
        <position position="599"/>
    </location>
</feature>
<feature type="modified residue" description="Allysine" evidence="2">
    <location>
        <position position="603"/>
    </location>
</feature>
<feature type="modified residue" description="4-hydroxyproline" evidence="1">
    <location>
        <position position="617"/>
    </location>
</feature>
<feature type="modified residue" description="4-hydroxyproline" evidence="1">
    <location>
        <position position="626"/>
    </location>
</feature>
<feature type="modified residue" description="4-hydroxyproline" evidence="1">
    <location>
        <position position="644"/>
    </location>
</feature>
<feature type="modified residue" description="4-hydroxyproline" evidence="1">
    <location>
        <position position="653"/>
    </location>
</feature>
<feature type="modified residue" description="4-hydroxyproline" evidence="1">
    <location>
        <position position="661"/>
    </location>
</feature>
<feature type="modified residue" description="Allysine" evidence="2">
    <location>
        <position position="668"/>
    </location>
</feature>
<feature type="modified residue" description="Allysine" evidence="2">
    <location>
        <position position="671"/>
    </location>
</feature>
<feature type="modified residue" description="4-hydroxyproline" evidence="1">
    <location>
        <position position="702"/>
    </location>
</feature>
<feature type="modified residue" description="Allysine" evidence="2">
    <location>
        <position position="719"/>
    </location>
</feature>
<feature type="modified residue" description="Allysine" evidence="2">
    <location>
        <position position="723"/>
    </location>
</feature>
<feature type="modified residue" description="Allysine" evidence="2">
    <location>
        <position position="783"/>
    </location>
</feature>
<feature type="modified residue" description="Allysine" evidence="2">
    <location>
        <position position="786"/>
    </location>
</feature>
<feature type="modified residue" description="4-hydroxyproline" evidence="1">
    <location>
        <position position="832"/>
    </location>
</feature>
<feature type="disulfide bond" evidence="1">
    <location>
        <begin position="850"/>
        <end position="855"/>
    </location>
</feature>
<feature type="sequence conflict" description="In Ref. 1; AAA80155." evidence="6" ref="1">
    <original>A</original>
    <variation>S</variation>
    <location>
        <position position="250"/>
    </location>
</feature>
<accession>P54320</accession>
<accession>Q8C9L8</accession>
<gene>
    <name type="primary">Eln</name>
</gene>
<reference key="1">
    <citation type="journal article" date="1994" name="Genomics">
        <title>Use of an intron polymorphism to localize the tropoelastin gene to mouse chromosome 5 in a region of linkage conservation with human chromosome 7.</title>
        <authorList>
            <person name="Wydner K.S."/>
            <person name="Sechler J.L."/>
            <person name="Boyd C.D."/>
            <person name="Passmore H.C."/>
        </authorList>
    </citation>
    <scope>NUCLEOTIDE SEQUENCE [MRNA]</scope>
    <source>
        <strain>BALB/cJ</strain>
        <tissue>Lung</tissue>
    </source>
</reference>
<reference key="2">
    <citation type="journal article" date="2005" name="Science">
        <title>The transcriptional landscape of the mammalian genome.</title>
        <authorList>
            <person name="Carninci P."/>
            <person name="Kasukawa T."/>
            <person name="Katayama S."/>
            <person name="Gough J."/>
            <person name="Frith M.C."/>
            <person name="Maeda N."/>
            <person name="Oyama R."/>
            <person name="Ravasi T."/>
            <person name="Lenhard B."/>
            <person name="Wells C."/>
            <person name="Kodzius R."/>
            <person name="Shimokawa K."/>
            <person name="Bajic V.B."/>
            <person name="Brenner S.E."/>
            <person name="Batalov S."/>
            <person name="Forrest A.R."/>
            <person name="Zavolan M."/>
            <person name="Davis M.J."/>
            <person name="Wilming L.G."/>
            <person name="Aidinis V."/>
            <person name="Allen J.E."/>
            <person name="Ambesi-Impiombato A."/>
            <person name="Apweiler R."/>
            <person name="Aturaliya R.N."/>
            <person name="Bailey T.L."/>
            <person name="Bansal M."/>
            <person name="Baxter L."/>
            <person name="Beisel K.W."/>
            <person name="Bersano T."/>
            <person name="Bono H."/>
            <person name="Chalk A.M."/>
            <person name="Chiu K.P."/>
            <person name="Choudhary V."/>
            <person name="Christoffels A."/>
            <person name="Clutterbuck D.R."/>
            <person name="Crowe M.L."/>
            <person name="Dalla E."/>
            <person name="Dalrymple B.P."/>
            <person name="de Bono B."/>
            <person name="Della Gatta G."/>
            <person name="di Bernardo D."/>
            <person name="Down T."/>
            <person name="Engstrom P."/>
            <person name="Fagiolini M."/>
            <person name="Faulkner G."/>
            <person name="Fletcher C.F."/>
            <person name="Fukushima T."/>
            <person name="Furuno M."/>
            <person name="Futaki S."/>
            <person name="Gariboldi M."/>
            <person name="Georgii-Hemming P."/>
            <person name="Gingeras T.R."/>
            <person name="Gojobori T."/>
            <person name="Green R.E."/>
            <person name="Gustincich S."/>
            <person name="Harbers M."/>
            <person name="Hayashi Y."/>
            <person name="Hensch T.K."/>
            <person name="Hirokawa N."/>
            <person name="Hill D."/>
            <person name="Huminiecki L."/>
            <person name="Iacono M."/>
            <person name="Ikeo K."/>
            <person name="Iwama A."/>
            <person name="Ishikawa T."/>
            <person name="Jakt M."/>
            <person name="Kanapin A."/>
            <person name="Katoh M."/>
            <person name="Kawasawa Y."/>
            <person name="Kelso J."/>
            <person name="Kitamura H."/>
            <person name="Kitano H."/>
            <person name="Kollias G."/>
            <person name="Krishnan S.P."/>
            <person name="Kruger A."/>
            <person name="Kummerfeld S.K."/>
            <person name="Kurochkin I.V."/>
            <person name="Lareau L.F."/>
            <person name="Lazarevic D."/>
            <person name="Lipovich L."/>
            <person name="Liu J."/>
            <person name="Liuni S."/>
            <person name="McWilliam S."/>
            <person name="Madan Babu M."/>
            <person name="Madera M."/>
            <person name="Marchionni L."/>
            <person name="Matsuda H."/>
            <person name="Matsuzawa S."/>
            <person name="Miki H."/>
            <person name="Mignone F."/>
            <person name="Miyake S."/>
            <person name="Morris K."/>
            <person name="Mottagui-Tabar S."/>
            <person name="Mulder N."/>
            <person name="Nakano N."/>
            <person name="Nakauchi H."/>
            <person name="Ng P."/>
            <person name="Nilsson R."/>
            <person name="Nishiguchi S."/>
            <person name="Nishikawa S."/>
            <person name="Nori F."/>
            <person name="Ohara O."/>
            <person name="Okazaki Y."/>
            <person name="Orlando V."/>
            <person name="Pang K.C."/>
            <person name="Pavan W.J."/>
            <person name="Pavesi G."/>
            <person name="Pesole G."/>
            <person name="Petrovsky N."/>
            <person name="Piazza S."/>
            <person name="Reed J."/>
            <person name="Reid J.F."/>
            <person name="Ring B.Z."/>
            <person name="Ringwald M."/>
            <person name="Rost B."/>
            <person name="Ruan Y."/>
            <person name="Salzberg S.L."/>
            <person name="Sandelin A."/>
            <person name="Schneider C."/>
            <person name="Schoenbach C."/>
            <person name="Sekiguchi K."/>
            <person name="Semple C.A."/>
            <person name="Seno S."/>
            <person name="Sessa L."/>
            <person name="Sheng Y."/>
            <person name="Shibata Y."/>
            <person name="Shimada H."/>
            <person name="Shimada K."/>
            <person name="Silva D."/>
            <person name="Sinclair B."/>
            <person name="Sperling S."/>
            <person name="Stupka E."/>
            <person name="Sugiura K."/>
            <person name="Sultana R."/>
            <person name="Takenaka Y."/>
            <person name="Taki K."/>
            <person name="Tammoja K."/>
            <person name="Tan S.L."/>
            <person name="Tang S."/>
            <person name="Taylor M.S."/>
            <person name="Tegner J."/>
            <person name="Teichmann S.A."/>
            <person name="Ueda H.R."/>
            <person name="van Nimwegen E."/>
            <person name="Verardo R."/>
            <person name="Wei C.L."/>
            <person name="Yagi K."/>
            <person name="Yamanishi H."/>
            <person name="Zabarovsky E."/>
            <person name="Zhu S."/>
            <person name="Zimmer A."/>
            <person name="Hide W."/>
            <person name="Bult C."/>
            <person name="Grimmond S.M."/>
            <person name="Teasdale R.D."/>
            <person name="Liu E.T."/>
            <person name="Brusic V."/>
            <person name="Quackenbush J."/>
            <person name="Wahlestedt C."/>
            <person name="Mattick J.S."/>
            <person name="Hume D.A."/>
            <person name="Kai C."/>
            <person name="Sasaki D."/>
            <person name="Tomaru Y."/>
            <person name="Fukuda S."/>
            <person name="Kanamori-Katayama M."/>
            <person name="Suzuki M."/>
            <person name="Aoki J."/>
            <person name="Arakawa T."/>
            <person name="Iida J."/>
            <person name="Imamura K."/>
            <person name="Itoh M."/>
            <person name="Kato T."/>
            <person name="Kawaji H."/>
            <person name="Kawagashira N."/>
            <person name="Kawashima T."/>
            <person name="Kojima M."/>
            <person name="Kondo S."/>
            <person name="Konno H."/>
            <person name="Nakano K."/>
            <person name="Ninomiya N."/>
            <person name="Nishio T."/>
            <person name="Okada M."/>
            <person name="Plessy C."/>
            <person name="Shibata K."/>
            <person name="Shiraki T."/>
            <person name="Suzuki S."/>
            <person name="Tagami M."/>
            <person name="Waki K."/>
            <person name="Watahiki A."/>
            <person name="Okamura-Oho Y."/>
            <person name="Suzuki H."/>
            <person name="Kawai J."/>
            <person name="Hayashizaki Y."/>
        </authorList>
    </citation>
    <scope>NUCLEOTIDE SEQUENCE [LARGE SCALE MRNA]</scope>
    <source>
        <strain>C57BL/6J</strain>
        <tissue>Thymus</tissue>
    </source>
</reference>
<reference key="3">
    <citation type="submission" date="2005-07" db="EMBL/GenBank/DDBJ databases">
        <authorList>
            <person name="Mural R.J."/>
            <person name="Adams M.D."/>
            <person name="Myers E.W."/>
            <person name="Smith H.O."/>
            <person name="Venter J.C."/>
        </authorList>
    </citation>
    <scope>NUCLEOTIDE SEQUENCE [LARGE SCALE GENOMIC DNA]</scope>
</reference>
<reference key="4">
    <citation type="journal article" date="2004" name="Genome Res.">
        <title>The status, quality, and expansion of the NIH full-length cDNA project: the Mammalian Gene Collection (MGC).</title>
        <authorList>
            <consortium name="The MGC Project Team"/>
        </authorList>
    </citation>
    <scope>NUCLEOTIDE SEQUENCE [LARGE SCALE MRNA]</scope>
</reference>
<reference key="5">
    <citation type="journal article" date="1998" name="Nature">
        <title>Elastin is an essential determinant of arterial morphogenesis.</title>
        <authorList>
            <person name="Li D.Y."/>
            <person name="Brooke B."/>
            <person name="Davis E.C."/>
            <person name="Mecham R.P."/>
            <person name="Sorensen L.K."/>
            <person name="Boak B.B."/>
            <person name="Eichwald E."/>
            <person name="Keating M.T."/>
        </authorList>
    </citation>
    <scope>FUNCTION</scope>
</reference>
<reference key="6">
    <citation type="journal article" date="2010" name="Cell">
        <title>A tissue-specific atlas of mouse protein phosphorylation and expression.</title>
        <authorList>
            <person name="Huttlin E.L."/>
            <person name="Jedrychowski M.P."/>
            <person name="Elias J.E."/>
            <person name="Goswami T."/>
            <person name="Rad R."/>
            <person name="Beausoleil S.A."/>
            <person name="Villen J."/>
            <person name="Haas W."/>
            <person name="Sowa M.E."/>
            <person name="Gygi S.P."/>
        </authorList>
    </citation>
    <scope>IDENTIFICATION BY MASS SPECTROMETRY [LARGE SCALE ANALYSIS]</scope>
    <source>
        <tissue>Lung</tissue>
        <tissue>Spleen</tissue>
        <tissue>Testis</tissue>
    </source>
</reference>
<keyword id="KW-1015">Disulfide bond</keyword>
<keyword id="KW-0272">Extracellular matrix</keyword>
<keyword id="KW-0379">Hydroxylation</keyword>
<keyword id="KW-1185">Reference proteome</keyword>
<keyword id="KW-0677">Repeat</keyword>
<keyword id="KW-0964">Secreted</keyword>
<keyword id="KW-0732">Signal</keyword>
<name>ELN_MOUSE</name>
<evidence type="ECO:0000250" key="1"/>
<evidence type="ECO:0000250" key="2">
    <source>
        <dbReference type="UniProtKB" id="P04985"/>
    </source>
</evidence>
<evidence type="ECO:0000250" key="3">
    <source>
        <dbReference type="UniProtKB" id="P15502"/>
    </source>
</evidence>
<evidence type="ECO:0000250" key="4">
    <source>
        <dbReference type="UniProtKB" id="Q99372"/>
    </source>
</evidence>
<evidence type="ECO:0000269" key="5">
    <source>
    </source>
</evidence>
<evidence type="ECO:0000305" key="6"/>
<protein>
    <recommendedName>
        <fullName>Elastin</fullName>
    </recommendedName>
    <alternativeName>
        <fullName>Tropoelastin</fullName>
    </alternativeName>
</protein>
<organism>
    <name type="scientific">Mus musculus</name>
    <name type="common">Mouse</name>
    <dbReference type="NCBI Taxonomy" id="10090"/>
    <lineage>
        <taxon>Eukaryota</taxon>
        <taxon>Metazoa</taxon>
        <taxon>Chordata</taxon>
        <taxon>Craniata</taxon>
        <taxon>Vertebrata</taxon>
        <taxon>Euteleostomi</taxon>
        <taxon>Mammalia</taxon>
        <taxon>Eutheria</taxon>
        <taxon>Euarchontoglires</taxon>
        <taxon>Glires</taxon>
        <taxon>Rodentia</taxon>
        <taxon>Myomorpha</taxon>
        <taxon>Muroidea</taxon>
        <taxon>Muridae</taxon>
        <taxon>Murinae</taxon>
        <taxon>Mus</taxon>
        <taxon>Mus</taxon>
    </lineage>
</organism>
<dbReference type="EMBL" id="U08210">
    <property type="protein sequence ID" value="AAA80155.1"/>
    <property type="molecule type" value="mRNA"/>
</dbReference>
<dbReference type="EMBL" id="AK041860">
    <property type="protein sequence ID" value="BAC31084.1"/>
    <property type="molecule type" value="mRNA"/>
</dbReference>
<dbReference type="EMBL" id="CH466529">
    <property type="protein sequence ID" value="EDL19414.1"/>
    <property type="molecule type" value="Genomic_DNA"/>
</dbReference>
<dbReference type="EMBL" id="BC051649">
    <property type="protein sequence ID" value="AAH51649.1"/>
    <property type="molecule type" value="mRNA"/>
</dbReference>
<dbReference type="CCDS" id="CCDS19725.1"/>
<dbReference type="PIR" id="A55721">
    <property type="entry name" value="EAMS"/>
</dbReference>
<dbReference type="RefSeq" id="NP_031951.2">
    <property type="nucleotide sequence ID" value="NM_007925.4"/>
</dbReference>
<dbReference type="BioGRID" id="199433">
    <property type="interactions" value="3"/>
</dbReference>
<dbReference type="FunCoup" id="P54320">
    <property type="interactions" value="202"/>
</dbReference>
<dbReference type="IntAct" id="P54320">
    <property type="interactions" value="1"/>
</dbReference>
<dbReference type="STRING" id="10090.ENSMUSP00000015138"/>
<dbReference type="GlyGen" id="P54320">
    <property type="glycosylation" value="1 site"/>
</dbReference>
<dbReference type="PhosphoSitePlus" id="P54320"/>
<dbReference type="jPOST" id="P54320"/>
<dbReference type="PaxDb" id="10090-ENSMUSP00000015138"/>
<dbReference type="ProteomicsDB" id="277820"/>
<dbReference type="Antibodypedia" id="4380">
    <property type="antibodies" value="418 antibodies from 36 providers"/>
</dbReference>
<dbReference type="DNASU" id="13717"/>
<dbReference type="Ensembl" id="ENSMUST00000015138.13">
    <property type="protein sequence ID" value="ENSMUSP00000015138.10"/>
    <property type="gene ID" value="ENSMUSG00000029675.13"/>
</dbReference>
<dbReference type="GeneID" id="13717"/>
<dbReference type="KEGG" id="mmu:13717"/>
<dbReference type="UCSC" id="uc008zwv.1">
    <property type="organism name" value="mouse"/>
</dbReference>
<dbReference type="AGR" id="MGI:95317"/>
<dbReference type="CTD" id="2006"/>
<dbReference type="MGI" id="MGI:95317">
    <property type="gene designation" value="Eln"/>
</dbReference>
<dbReference type="VEuPathDB" id="HostDB:ENSMUSG00000029675"/>
<dbReference type="eggNOG" id="ENOG502RYNR">
    <property type="taxonomic scope" value="Eukaryota"/>
</dbReference>
<dbReference type="GeneTree" id="ENSGT00730000111510"/>
<dbReference type="HOGENOM" id="CLU_021236_0_0_1"/>
<dbReference type="InParanoid" id="P54320"/>
<dbReference type="OMA" id="CILHPSQ"/>
<dbReference type="Reactome" id="R-MMU-1474228">
    <property type="pathway name" value="Degradation of the extracellular matrix"/>
</dbReference>
<dbReference type="Reactome" id="R-MMU-1566948">
    <property type="pathway name" value="Elastic fibre formation"/>
</dbReference>
<dbReference type="Reactome" id="R-MMU-2129379">
    <property type="pathway name" value="Molecules associated with elastic fibres"/>
</dbReference>
<dbReference type="BioGRID-ORCS" id="13717">
    <property type="hits" value="6 hits in 80 CRISPR screens"/>
</dbReference>
<dbReference type="ChiTaRS" id="Eln">
    <property type="organism name" value="mouse"/>
</dbReference>
<dbReference type="PRO" id="PR:P54320"/>
<dbReference type="Proteomes" id="UP000000589">
    <property type="component" value="Chromosome 5"/>
</dbReference>
<dbReference type="RNAct" id="P54320">
    <property type="molecule type" value="protein"/>
</dbReference>
<dbReference type="Bgee" id="ENSMUSG00000029675">
    <property type="expression patterns" value="Expressed in ascending aorta and 270 other cell types or tissues"/>
</dbReference>
<dbReference type="ExpressionAtlas" id="P54320">
    <property type="expression patterns" value="baseline and differential"/>
</dbReference>
<dbReference type="GO" id="GO:0062023">
    <property type="term" value="C:collagen-containing extracellular matrix"/>
    <property type="evidence" value="ECO:0007005"/>
    <property type="project" value="BHF-UCL"/>
</dbReference>
<dbReference type="GO" id="GO:0071953">
    <property type="term" value="C:elastic fiber"/>
    <property type="evidence" value="ECO:0000314"/>
    <property type="project" value="MGI"/>
</dbReference>
<dbReference type="GO" id="GO:0005576">
    <property type="term" value="C:extracellular region"/>
    <property type="evidence" value="ECO:0007669"/>
    <property type="project" value="UniProtKB-KW"/>
</dbReference>
<dbReference type="GO" id="GO:0005739">
    <property type="term" value="C:mitochondrion"/>
    <property type="evidence" value="ECO:0007005"/>
    <property type="project" value="MGI"/>
</dbReference>
<dbReference type="GO" id="GO:0050840">
    <property type="term" value="F:extracellular matrix binding"/>
    <property type="evidence" value="ECO:0000314"/>
    <property type="project" value="MGI"/>
</dbReference>
<dbReference type="GO" id="GO:0030023">
    <property type="term" value="F:extracellular matrix constituent conferring elasticity"/>
    <property type="evidence" value="ECO:0000314"/>
    <property type="project" value="BHF-UCL"/>
</dbReference>
<dbReference type="GO" id="GO:0003180">
    <property type="term" value="P:aortic valve morphogenesis"/>
    <property type="evidence" value="ECO:0000315"/>
    <property type="project" value="BHF-UCL"/>
</dbReference>
<dbReference type="GO" id="GO:0085029">
    <property type="term" value="P:extracellular matrix assembly"/>
    <property type="evidence" value="ECO:0000315"/>
    <property type="project" value="BHF-UCL"/>
</dbReference>
<dbReference type="GO" id="GO:0030198">
    <property type="term" value="P:extracellular matrix organization"/>
    <property type="evidence" value="ECO:0000314"/>
    <property type="project" value="MGI"/>
</dbReference>
<dbReference type="GO" id="GO:0003151">
    <property type="term" value="P:outflow tract morphogenesis"/>
    <property type="evidence" value="ECO:0007669"/>
    <property type="project" value="Ensembl"/>
</dbReference>
<dbReference type="GO" id="GO:0030833">
    <property type="term" value="P:regulation of actin filament polymerization"/>
    <property type="evidence" value="ECO:0000315"/>
    <property type="project" value="MGI"/>
</dbReference>
<dbReference type="GO" id="GO:0007519">
    <property type="term" value="P:skeletal muscle tissue development"/>
    <property type="evidence" value="ECO:0000315"/>
    <property type="project" value="MGI"/>
</dbReference>
<dbReference type="GO" id="GO:0043149">
    <property type="term" value="P:stress fiber assembly"/>
    <property type="evidence" value="ECO:0000315"/>
    <property type="project" value="MGI"/>
</dbReference>
<dbReference type="InterPro" id="IPR003979">
    <property type="entry name" value="Tropoelastin"/>
</dbReference>
<dbReference type="PANTHER" id="PTHR24018">
    <property type="entry name" value="ELASTIN"/>
    <property type="match status" value="1"/>
</dbReference>
<dbReference type="PANTHER" id="PTHR24018:SF5">
    <property type="entry name" value="ELASTIN"/>
    <property type="match status" value="1"/>
</dbReference>
<dbReference type="PRINTS" id="PR01500">
    <property type="entry name" value="TROPOELASTIN"/>
</dbReference>
<proteinExistence type="evidence at protein level"/>
<comment type="function">
    <text evidence="5">Major structural protein of tissues such as aorta and nuchal ligament, which must expand rapidly and recover completely. Molecular determinant of the late arterial morphogenesis, stabilizing arterial structure by regulating proliferation and organization of vascular smooth muscle.</text>
</comment>
<comment type="subunit">
    <text evidence="2 3">The polymeric elastin chains are cross-linked together into an extensible 3D network. Forms a ternary complex with BGN and MFAP2. Interacts with MFAP2 via divalent cations (calcium &gt; magnesium &gt; manganese) in a dose-dependent and saturating manner. Interacts with FBLN5 and FBN1. Forms a ternary complex with FBN1 and FBLN2 or FBLN5. Interacts with MFAP4 in a Ca (2+)-dependent manner; this interaction promotes ELN self-assembly (By similarity). Interacts with EFEMP2 with moderate affinity (By similarity).</text>
</comment>
<comment type="subcellular location">
    <subcellularLocation>
        <location evidence="3">Secreted</location>
        <location evidence="3">Extracellular space</location>
        <location evidence="3">Extracellular matrix</location>
    </subcellularLocation>
    <text evidence="3">Extracellular matrix of elastic fibers.</text>
</comment>
<comment type="PTM">
    <text>Elastin is formed through the cross-linking of its soluble precursor tropoelastin. Cross-linking is initiated through the action of lysyl oxidase on exposed lysines to form allysine. Subsequent spontaneous condensation reactions with other allysine or unmodified lysine residues result in various bi-, tri-, and tetrafunctional cross-links. The most abundant cross-links in mature elastin fibers are lysinonorleucine, allysine aldol, desmosine, and isodesmosine.</text>
</comment>
<comment type="PTM">
    <text evidence="1">Hydroxylation on proline residues within the sequence motif, GXPG, is most likely to be 4-hydroxy as this fits the requirement for 4-hydroxylation in vertebrates.</text>
</comment>
<comment type="similarity">
    <text evidence="6">Belongs to the elastin family.</text>
</comment>